<gene>
    <name evidence="1" type="primary">yciC</name>
    <name type="ordered locus">SCH_1730</name>
</gene>
<organism>
    <name type="scientific">Salmonella choleraesuis (strain SC-B67)</name>
    <dbReference type="NCBI Taxonomy" id="321314"/>
    <lineage>
        <taxon>Bacteria</taxon>
        <taxon>Pseudomonadati</taxon>
        <taxon>Pseudomonadota</taxon>
        <taxon>Gammaproteobacteria</taxon>
        <taxon>Enterobacterales</taxon>
        <taxon>Enterobacteriaceae</taxon>
        <taxon>Salmonella</taxon>
    </lineage>
</organism>
<accession>Q57NS5</accession>
<reference key="1">
    <citation type="journal article" date="2005" name="Nucleic Acids Res.">
        <title>The genome sequence of Salmonella enterica serovar Choleraesuis, a highly invasive and resistant zoonotic pathogen.</title>
        <authorList>
            <person name="Chiu C.-H."/>
            <person name="Tang P."/>
            <person name="Chu C."/>
            <person name="Hu S."/>
            <person name="Bao Q."/>
            <person name="Yu J."/>
            <person name="Chou Y.-Y."/>
            <person name="Wang H.-S."/>
            <person name="Lee Y.-S."/>
        </authorList>
    </citation>
    <scope>NUCLEOTIDE SEQUENCE [LARGE SCALE GENOMIC DNA]</scope>
    <source>
        <strain>SC-B67</strain>
    </source>
</reference>
<keyword id="KW-0997">Cell inner membrane</keyword>
<keyword id="KW-1003">Cell membrane</keyword>
<keyword id="KW-0472">Membrane</keyword>
<keyword id="KW-0812">Transmembrane</keyword>
<keyword id="KW-1133">Transmembrane helix</keyword>
<comment type="subcellular location">
    <subcellularLocation>
        <location evidence="1">Cell inner membrane</location>
        <topology evidence="1">Multi-pass membrane protein</topology>
    </subcellularLocation>
</comment>
<comment type="similarity">
    <text evidence="1">Belongs to the UPF0259 family.</text>
</comment>
<evidence type="ECO:0000255" key="1">
    <source>
        <dbReference type="HAMAP-Rule" id="MF_01067"/>
    </source>
</evidence>
<sequence length="247" mass="26371">MSITAKSVYRDAGNFFRNQFITILLVSLLCAFITVVLGHAFSPSDAQIAQLSEGEHLAGSAGLFELVQNMTPEQQQILLRASAASTFSGLIGNAILAGGIILMIQLVSAGHRVSALRAIGASAPALPKLFILIFLTTLLVQIGIMLIVVPGIIMAIVLALAPVMLVEEKMGVFAAMRSSMRLAWANMRLVAPAVIGWLLAKTLLLLFAPSFAVLTPNVGAVLANTLSNLISAVLLIYLFRLYMLIRQ</sequence>
<dbReference type="EMBL" id="AE017220">
    <property type="protein sequence ID" value="AAX65636.1"/>
    <property type="molecule type" value="Genomic_DNA"/>
</dbReference>
<dbReference type="RefSeq" id="WP_000028507.1">
    <property type="nucleotide sequence ID" value="NC_006905.1"/>
</dbReference>
<dbReference type="KEGG" id="sec:SCH_1730"/>
<dbReference type="HOGENOM" id="CLU_073287_0_0_6"/>
<dbReference type="Proteomes" id="UP000000538">
    <property type="component" value="Chromosome"/>
</dbReference>
<dbReference type="GO" id="GO:0005886">
    <property type="term" value="C:plasma membrane"/>
    <property type="evidence" value="ECO:0007669"/>
    <property type="project" value="UniProtKB-SubCell"/>
</dbReference>
<dbReference type="HAMAP" id="MF_01067">
    <property type="entry name" value="UPF0259"/>
    <property type="match status" value="1"/>
</dbReference>
<dbReference type="InterPro" id="IPR009627">
    <property type="entry name" value="UPF0259"/>
</dbReference>
<dbReference type="NCBIfam" id="NF002774">
    <property type="entry name" value="PRK02868.1"/>
    <property type="match status" value="1"/>
</dbReference>
<dbReference type="Pfam" id="PF06790">
    <property type="entry name" value="UPF0259"/>
    <property type="match status" value="1"/>
</dbReference>
<name>YCIC_SALCH</name>
<feature type="chain" id="PRO_1000064529" description="UPF0259 membrane protein YciC">
    <location>
        <begin position="1"/>
        <end position="247"/>
    </location>
</feature>
<feature type="transmembrane region" description="Helical" evidence="1">
    <location>
        <begin position="20"/>
        <end position="40"/>
    </location>
</feature>
<feature type="transmembrane region" description="Helical" evidence="1">
    <location>
        <begin position="87"/>
        <end position="107"/>
    </location>
</feature>
<feature type="transmembrane region" description="Helical" evidence="1">
    <location>
        <begin position="118"/>
        <end position="140"/>
    </location>
</feature>
<feature type="transmembrane region" description="Helical" evidence="1">
    <location>
        <begin position="152"/>
        <end position="172"/>
    </location>
</feature>
<feature type="transmembrane region" description="Helical" evidence="1">
    <location>
        <begin position="194"/>
        <end position="214"/>
    </location>
</feature>
<feature type="transmembrane region" description="Helical" evidence="1">
    <location>
        <begin position="219"/>
        <end position="239"/>
    </location>
</feature>
<protein>
    <recommendedName>
        <fullName evidence="1">UPF0259 membrane protein YciC</fullName>
    </recommendedName>
</protein>
<proteinExistence type="inferred from homology"/>